<organism>
    <name type="scientific">Lactuca saligna</name>
    <name type="common">Willowleaf lettuce</name>
    <dbReference type="NCBI Taxonomy" id="75948"/>
    <lineage>
        <taxon>Eukaryota</taxon>
        <taxon>Viridiplantae</taxon>
        <taxon>Streptophyta</taxon>
        <taxon>Embryophyta</taxon>
        <taxon>Tracheophyta</taxon>
        <taxon>Spermatophyta</taxon>
        <taxon>Magnoliopsida</taxon>
        <taxon>eudicotyledons</taxon>
        <taxon>Gunneridae</taxon>
        <taxon>Pentapetalae</taxon>
        <taxon>asterids</taxon>
        <taxon>campanulids</taxon>
        <taxon>Asterales</taxon>
        <taxon>Asteraceae</taxon>
        <taxon>Cichorioideae</taxon>
        <taxon>Cichorieae</taxon>
        <taxon>Lactucinae</taxon>
        <taxon>Lactuca</taxon>
    </lineage>
</organism>
<protein>
    <recommendedName>
        <fullName>Casparian strip membrane protein 1</fullName>
        <shortName>LsCASP1</shortName>
    </recommendedName>
</protein>
<sequence length="192" mass="20452">MTKSVRLEEGDASKVLVPVGSNKGVSVMDLVLRLVGIAGTLGAAIAMGTNEQTLPFFTRFVVFNAEYDDFRSFRLFVIVNAIVCAYFVLTLPLSIVHIMRSAARGSRILLIIMDTVMLALLTAGASAAASIVYLAHNGNTSTNWLPVCQQYGDFCQGASGSLIGSFGAVVVFILIILLGAIALSRHAKRVVL</sequence>
<feature type="chain" id="PRO_0000417773" description="Casparian strip membrane protein 1">
    <location>
        <begin position="1"/>
        <end position="192"/>
    </location>
</feature>
<feature type="topological domain" description="Cytoplasmic" evidence="2">
    <location>
        <begin position="1"/>
        <end position="26"/>
    </location>
</feature>
<feature type="transmembrane region" description="Helical" evidence="2">
    <location>
        <begin position="27"/>
        <end position="47"/>
    </location>
</feature>
<feature type="topological domain" description="Extracellular" evidence="2">
    <location>
        <begin position="48"/>
        <end position="75"/>
    </location>
</feature>
<feature type="transmembrane region" description="Helical" evidence="2">
    <location>
        <begin position="76"/>
        <end position="96"/>
    </location>
</feature>
<feature type="topological domain" description="Cytoplasmic" evidence="2">
    <location>
        <begin position="97"/>
        <end position="107"/>
    </location>
</feature>
<feature type="transmembrane region" description="Helical" evidence="2">
    <location>
        <begin position="108"/>
        <end position="128"/>
    </location>
</feature>
<feature type="topological domain" description="Extracellular" evidence="2">
    <location>
        <begin position="129"/>
        <end position="161"/>
    </location>
</feature>
<feature type="transmembrane region" description="Helical" evidence="2">
    <location>
        <begin position="162"/>
        <end position="182"/>
    </location>
</feature>
<feature type="topological domain" description="Cytoplasmic" evidence="2">
    <location>
        <begin position="183"/>
        <end position="192"/>
    </location>
</feature>
<feature type="glycosylation site" description="N-linked (GlcNAc...) asparagine" evidence="2">
    <location>
        <position position="139"/>
    </location>
</feature>
<proteinExistence type="evidence at transcript level"/>
<reference key="1">
    <citation type="submission" date="2009-05" db="EMBL/GenBank/DDBJ databases">
        <title>Lettuce and Sunflower ESTs from the compositae genome project http://compgenomics.ucdavis.edu/.</title>
        <authorList>
            <person name="Kozik A."/>
            <person name="Michelmore R.W."/>
            <person name="Knapp S."/>
            <person name="Matvienko M."/>
            <person name="Rieseberg L."/>
            <person name="Lin H."/>
            <person name="van Damme M."/>
            <person name="Lavelle D."/>
            <person name="Chevalier P."/>
            <person name="Ziegle J."/>
            <person name="Ellison P."/>
            <person name="Kolkman J."/>
            <person name="Slabaugh M.S."/>
            <person name="Livingston K."/>
            <person name="Zhou Y."/>
            <person name="Lai Z."/>
            <person name="Church S."/>
            <person name="Jackson L."/>
            <person name="Bradford K."/>
        </authorList>
    </citation>
    <scope>NUCLEOTIDE SEQUENCE [LARGE SCALE MRNA]</scope>
</reference>
<reference key="2">
    <citation type="journal article" date="2014" name="Plant Physiol.">
        <title>Functional and evolutionary analysis of the CASPARIAN STRIP MEMBRANE DOMAIN PROTEIN family.</title>
        <authorList>
            <person name="Roppolo D."/>
            <person name="Boeckmann B."/>
            <person name="Pfister A."/>
            <person name="Boutet E."/>
            <person name="Rubio M.C."/>
            <person name="Denervaud-Tendon V."/>
            <person name="Vermeer J.E."/>
            <person name="Gheyselinck J."/>
            <person name="Xenarios I."/>
            <person name="Geldner N."/>
        </authorList>
    </citation>
    <scope>GENE FAMILY</scope>
    <scope>NOMENCLATURE</scope>
</reference>
<dbReference type="EMBL" id="DW049263">
    <property type="status" value="NOT_ANNOTATED_CDS"/>
    <property type="molecule type" value="mRNA"/>
</dbReference>
<dbReference type="SMR" id="P0DI35"/>
<dbReference type="OrthoDB" id="753675at2759"/>
<dbReference type="GO" id="GO:0005886">
    <property type="term" value="C:plasma membrane"/>
    <property type="evidence" value="ECO:0007669"/>
    <property type="project" value="UniProtKB-SubCell"/>
</dbReference>
<dbReference type="GO" id="GO:0071555">
    <property type="term" value="P:cell wall organization"/>
    <property type="evidence" value="ECO:0007669"/>
    <property type="project" value="UniProtKB-KW"/>
</dbReference>
<dbReference type="InterPro" id="IPR006459">
    <property type="entry name" value="CASP/CASPL"/>
</dbReference>
<dbReference type="InterPro" id="IPR006702">
    <property type="entry name" value="CASP_dom"/>
</dbReference>
<dbReference type="InterPro" id="IPR044173">
    <property type="entry name" value="CASPL"/>
</dbReference>
<dbReference type="NCBIfam" id="TIGR01569">
    <property type="entry name" value="A_tha_TIGR01569"/>
    <property type="match status" value="1"/>
</dbReference>
<dbReference type="PANTHER" id="PTHR36488:SF12">
    <property type="entry name" value="CASP-LIKE PROTEIN"/>
    <property type="match status" value="1"/>
</dbReference>
<dbReference type="PANTHER" id="PTHR36488">
    <property type="entry name" value="CASP-LIKE PROTEIN 1U1"/>
    <property type="match status" value="1"/>
</dbReference>
<dbReference type="Pfam" id="PF04535">
    <property type="entry name" value="CASP_dom"/>
    <property type="match status" value="1"/>
</dbReference>
<comment type="function">
    <text evidence="1">Regulates membrane-cell wall junctions and localized cell wall deposition. Required for establishment of the Casparian strip membrane domain (CSD) and the subsequent formation of Casparian strips, a cell wall modification of the root endodermis that determines an apoplastic barrier between the intraorganismal apoplasm and the extraorganismal apoplasm and prevents lateral diffusion (By similarity).</text>
</comment>
<comment type="subunit">
    <text evidence="1">Homodimer and heterodimers.</text>
</comment>
<comment type="subcellular location">
    <subcellularLocation>
        <location evidence="1">Cell membrane</location>
        <topology evidence="1">Multi-pass membrane protein</topology>
    </subcellularLocation>
    <text evidence="1">Very restricted localization following a belt shape within the plasma membrane which coincides with the position of the Casparian strip membrane domain in the root endodermis.</text>
</comment>
<comment type="similarity">
    <text evidence="3">Belongs to the Casparian strip membrane proteins (CASP) family.</text>
</comment>
<name>CASP1_LACSI</name>
<keyword id="KW-1003">Cell membrane</keyword>
<keyword id="KW-0961">Cell wall biogenesis/degradation</keyword>
<keyword id="KW-0325">Glycoprotein</keyword>
<keyword id="KW-0472">Membrane</keyword>
<keyword id="KW-0812">Transmembrane</keyword>
<keyword id="KW-1133">Transmembrane helix</keyword>
<evidence type="ECO:0000250" key="1"/>
<evidence type="ECO:0000255" key="2"/>
<evidence type="ECO:0000305" key="3"/>
<accession>P0DI35</accession>